<organism>
    <name type="scientific">Staphylococcus aureus (strain MRSA252)</name>
    <dbReference type="NCBI Taxonomy" id="282458"/>
    <lineage>
        <taxon>Bacteria</taxon>
        <taxon>Bacillati</taxon>
        <taxon>Bacillota</taxon>
        <taxon>Bacilli</taxon>
        <taxon>Bacillales</taxon>
        <taxon>Staphylococcaceae</taxon>
        <taxon>Staphylococcus</taxon>
    </lineage>
</organism>
<reference key="1">
    <citation type="journal article" date="2004" name="Proc. Natl. Acad. Sci. U.S.A.">
        <title>Complete genomes of two clinical Staphylococcus aureus strains: evidence for the rapid evolution of virulence and drug resistance.</title>
        <authorList>
            <person name="Holden M.T.G."/>
            <person name="Feil E.J."/>
            <person name="Lindsay J.A."/>
            <person name="Peacock S.J."/>
            <person name="Day N.P.J."/>
            <person name="Enright M.C."/>
            <person name="Foster T.J."/>
            <person name="Moore C.E."/>
            <person name="Hurst L."/>
            <person name="Atkin R."/>
            <person name="Barron A."/>
            <person name="Bason N."/>
            <person name="Bentley S.D."/>
            <person name="Chillingworth C."/>
            <person name="Chillingworth T."/>
            <person name="Churcher C."/>
            <person name="Clark L."/>
            <person name="Corton C."/>
            <person name="Cronin A."/>
            <person name="Doggett J."/>
            <person name="Dowd L."/>
            <person name="Feltwell T."/>
            <person name="Hance Z."/>
            <person name="Harris B."/>
            <person name="Hauser H."/>
            <person name="Holroyd S."/>
            <person name="Jagels K."/>
            <person name="James K.D."/>
            <person name="Lennard N."/>
            <person name="Line A."/>
            <person name="Mayes R."/>
            <person name="Moule S."/>
            <person name="Mungall K."/>
            <person name="Ormond D."/>
            <person name="Quail M.A."/>
            <person name="Rabbinowitsch E."/>
            <person name="Rutherford K.M."/>
            <person name="Sanders M."/>
            <person name="Sharp S."/>
            <person name="Simmonds M."/>
            <person name="Stevens K."/>
            <person name="Whitehead S."/>
            <person name="Barrell B.G."/>
            <person name="Spratt B.G."/>
            <person name="Parkhill J."/>
        </authorList>
    </citation>
    <scope>NUCLEOTIDE SEQUENCE [LARGE SCALE GENOMIC DNA]</scope>
    <source>
        <strain>MRSA252</strain>
    </source>
</reference>
<accession>Q6GHN9</accession>
<dbReference type="EC" id="3.4.23.36" evidence="1"/>
<dbReference type="EMBL" id="BX571856">
    <property type="protein sequence ID" value="CAG40174.1"/>
    <property type="molecule type" value="Genomic_DNA"/>
</dbReference>
<dbReference type="RefSeq" id="WP_000549208.1">
    <property type="nucleotide sequence ID" value="NC_002952.2"/>
</dbReference>
<dbReference type="SMR" id="Q6GHN9"/>
<dbReference type="KEGG" id="sar:SAR1172"/>
<dbReference type="HOGENOM" id="CLU_083252_3_0_9"/>
<dbReference type="UniPathway" id="UPA00665"/>
<dbReference type="Proteomes" id="UP000000596">
    <property type="component" value="Chromosome"/>
</dbReference>
<dbReference type="GO" id="GO:0005886">
    <property type="term" value="C:plasma membrane"/>
    <property type="evidence" value="ECO:0007669"/>
    <property type="project" value="UniProtKB-SubCell"/>
</dbReference>
<dbReference type="GO" id="GO:0004190">
    <property type="term" value="F:aspartic-type endopeptidase activity"/>
    <property type="evidence" value="ECO:0007669"/>
    <property type="project" value="UniProtKB-UniRule"/>
</dbReference>
<dbReference type="GO" id="GO:0006508">
    <property type="term" value="P:proteolysis"/>
    <property type="evidence" value="ECO:0007669"/>
    <property type="project" value="UniProtKB-KW"/>
</dbReference>
<dbReference type="HAMAP" id="MF_00161">
    <property type="entry name" value="LspA"/>
    <property type="match status" value="1"/>
</dbReference>
<dbReference type="InterPro" id="IPR001872">
    <property type="entry name" value="Peptidase_A8"/>
</dbReference>
<dbReference type="NCBIfam" id="TIGR00077">
    <property type="entry name" value="lspA"/>
    <property type="match status" value="1"/>
</dbReference>
<dbReference type="PANTHER" id="PTHR33695">
    <property type="entry name" value="LIPOPROTEIN SIGNAL PEPTIDASE"/>
    <property type="match status" value="1"/>
</dbReference>
<dbReference type="PANTHER" id="PTHR33695:SF1">
    <property type="entry name" value="LIPOPROTEIN SIGNAL PEPTIDASE"/>
    <property type="match status" value="1"/>
</dbReference>
<dbReference type="Pfam" id="PF01252">
    <property type="entry name" value="Peptidase_A8"/>
    <property type="match status" value="1"/>
</dbReference>
<dbReference type="PRINTS" id="PR00781">
    <property type="entry name" value="LIPOSIGPTASE"/>
</dbReference>
<dbReference type="PROSITE" id="PS00855">
    <property type="entry name" value="SPASE_II"/>
    <property type="match status" value="1"/>
</dbReference>
<name>LSPA_STAAR</name>
<proteinExistence type="inferred from homology"/>
<evidence type="ECO:0000255" key="1">
    <source>
        <dbReference type="HAMAP-Rule" id="MF_00161"/>
    </source>
</evidence>
<comment type="function">
    <text evidence="1">This protein specifically catalyzes the removal of signal peptides from prolipoproteins.</text>
</comment>
<comment type="catalytic activity">
    <reaction evidence="1">
        <text>Release of signal peptides from bacterial membrane prolipoproteins. Hydrolyzes -Xaa-Yaa-Zaa-|-(S,diacylglyceryl)Cys-, in which Xaa is hydrophobic (preferably Leu), and Yaa (Ala or Ser) and Zaa (Gly or Ala) have small, neutral side chains.</text>
        <dbReference type="EC" id="3.4.23.36"/>
    </reaction>
</comment>
<comment type="pathway">
    <text evidence="1">Protein modification; lipoprotein biosynthesis (signal peptide cleavage).</text>
</comment>
<comment type="subcellular location">
    <subcellularLocation>
        <location evidence="1">Cell membrane</location>
        <topology evidence="1">Multi-pass membrane protein</topology>
    </subcellularLocation>
</comment>
<comment type="similarity">
    <text evidence="1">Belongs to the peptidase A8 family.</text>
</comment>
<keyword id="KW-0064">Aspartyl protease</keyword>
<keyword id="KW-1003">Cell membrane</keyword>
<keyword id="KW-0378">Hydrolase</keyword>
<keyword id="KW-0472">Membrane</keyword>
<keyword id="KW-0645">Protease</keyword>
<keyword id="KW-0812">Transmembrane</keyword>
<keyword id="KW-1133">Transmembrane helix</keyword>
<sequence>MHKKYFIGTSILIAVFVVIFDQVTKYIIATTMKIGDSFEVIPHFLNITSHRNNGAAWGILSGKMTFFFIITIIILIALVYFFIKDAQYNLFMQVAISLLFAGALGNFIDRVLTGEVVDFIDTNIFGYDFPIFNIADSSLTIGVILIIIALLKDTSNKKEKEVK</sequence>
<feature type="chain" id="PRO_0000178815" description="Lipoprotein signal peptidase">
    <location>
        <begin position="1"/>
        <end position="163"/>
    </location>
</feature>
<feature type="transmembrane region" description="Helical" evidence="1">
    <location>
        <begin position="11"/>
        <end position="31"/>
    </location>
</feature>
<feature type="transmembrane region" description="Helical" evidence="1">
    <location>
        <begin position="63"/>
        <end position="83"/>
    </location>
</feature>
<feature type="transmembrane region" description="Helical" evidence="1">
    <location>
        <begin position="88"/>
        <end position="108"/>
    </location>
</feature>
<feature type="transmembrane region" description="Helical" evidence="1">
    <location>
        <begin position="131"/>
        <end position="151"/>
    </location>
</feature>
<feature type="active site" evidence="1">
    <location>
        <position position="118"/>
    </location>
</feature>
<feature type="active site" evidence="1">
    <location>
        <position position="136"/>
    </location>
</feature>
<gene>
    <name evidence="1" type="primary">lspA</name>
    <name type="synonym">lsp</name>
    <name type="ordered locus">SAR1172</name>
</gene>
<protein>
    <recommendedName>
        <fullName evidence="1">Lipoprotein signal peptidase</fullName>
        <ecNumber evidence="1">3.4.23.36</ecNumber>
    </recommendedName>
    <alternativeName>
        <fullName evidence="1">Prolipoprotein signal peptidase</fullName>
    </alternativeName>
    <alternativeName>
        <fullName evidence="1">Signal peptidase II</fullName>
        <shortName evidence="1">SPase II</shortName>
    </alternativeName>
</protein>